<proteinExistence type="inferred from homology"/>
<reference key="1">
    <citation type="journal article" date="2003" name="Genome Res.">
        <title>Comparative complete genome sequence analysis of the amino acid replacements responsible for the thermostability of Corynebacterium efficiens.</title>
        <authorList>
            <person name="Nishio Y."/>
            <person name="Nakamura Y."/>
            <person name="Kawarabayasi Y."/>
            <person name="Usuda Y."/>
            <person name="Kimura E."/>
            <person name="Sugimoto S."/>
            <person name="Matsui K."/>
            <person name="Yamagishi A."/>
            <person name="Kikuchi H."/>
            <person name="Ikeo K."/>
            <person name="Gojobori T."/>
        </authorList>
    </citation>
    <scope>NUCLEOTIDE SEQUENCE [LARGE SCALE GENOMIC DNA]</scope>
    <source>
        <strain>DSM 44549 / YS-314 / AJ 12310 / JCM 11189 / NBRC 100395</strain>
    </source>
</reference>
<evidence type="ECO:0000255" key="1">
    <source>
        <dbReference type="HAMAP-Rule" id="MF_00044"/>
    </source>
</evidence>
<evidence type="ECO:0000256" key="2">
    <source>
        <dbReference type="SAM" id="MobiDB-lite"/>
    </source>
</evidence>
<evidence type="ECO:0000305" key="3"/>
<name>SYDND_COREF</name>
<comment type="function">
    <text evidence="1">Aspartyl-tRNA synthetase with relaxed tRNA specificity since it is able to aspartylate not only its cognate tRNA(Asp) but also tRNA(Asn). Reaction proceeds in two steps: L-aspartate is first activated by ATP to form Asp-AMP and then transferred to the acceptor end of tRNA(Asp/Asn).</text>
</comment>
<comment type="catalytic activity">
    <reaction evidence="1">
        <text>tRNA(Asx) + L-aspartate + ATP = L-aspartyl-tRNA(Asx) + AMP + diphosphate</text>
        <dbReference type="Rhea" id="RHEA:18349"/>
        <dbReference type="Rhea" id="RHEA-COMP:9710"/>
        <dbReference type="Rhea" id="RHEA-COMP:9711"/>
        <dbReference type="ChEBI" id="CHEBI:29991"/>
        <dbReference type="ChEBI" id="CHEBI:30616"/>
        <dbReference type="ChEBI" id="CHEBI:33019"/>
        <dbReference type="ChEBI" id="CHEBI:78442"/>
        <dbReference type="ChEBI" id="CHEBI:78516"/>
        <dbReference type="ChEBI" id="CHEBI:456215"/>
        <dbReference type="EC" id="6.1.1.23"/>
    </reaction>
</comment>
<comment type="subunit">
    <text evidence="1">Homodimer.</text>
</comment>
<comment type="subcellular location">
    <subcellularLocation>
        <location evidence="1">Cytoplasm</location>
    </subcellularLocation>
</comment>
<comment type="similarity">
    <text evidence="1">Belongs to the class-II aminoacyl-tRNA synthetase family. Type 1 subfamily.</text>
</comment>
<comment type="sequence caution" evidence="3">
    <conflict type="erroneous initiation">
        <sequence resource="EMBL-CDS" id="BAC18562"/>
    </conflict>
</comment>
<sequence length="600" mass="66237">MLRTHLSGELRKENAGQSVTLTGWVARRRDHGGVIFIDLRDRSGIAQVVFRNEDVAERAHALRSEFVLQVTGVVEKRPEGSENPNLASGDVEVSVTDFTVLNESAPLPFQIEDASSAGEVGEETRLKYRYLDLRRPVQANALRLRSAANKAARTVLDSHDFTEIETPTLTRSTPEGARDFLVPARLKPGTFYALPQSPQLFKQLLQVAGMERYYQIARCYRDEDFRADRQPEFTQLDVEMSFVDQEDVIALAEEILTEVWKLIGYEISTPIPRITYADAMRLYGSDKPDLRFDIQITECTDFFADTTFRVFKNEYVGAVVMKGGASQPRRQLDAWQEWAKQRGAKGLAYILVGEDGELGGPVAKNITDAEREGIAAHVGAEPGDCIFFAAGDTRSSRALLGAARDEIARKLDLIRDGEWSFVWVVDAPMFESAADATASGDVALGNSKWTAVHHAFTSPKPEFLDTFDENPGEALAYAYDIVCNGNEIGGGSIRIHQRDVQERVFKVMGISEEEARDKFGFLLDAFAFGAPPHGGIAFGWDRIVSLLGGFDSIRDVIAFPKSGGGVDPLTDAPAPITPLQRKESGIDAKPKAAENKPEEK</sequence>
<protein>
    <recommendedName>
        <fullName evidence="1">Aspartate--tRNA(Asp/Asn) ligase</fullName>
        <ecNumber evidence="1">6.1.1.23</ecNumber>
    </recommendedName>
    <alternativeName>
        <fullName evidence="1">Aspartyl-tRNA synthetase</fullName>
        <shortName evidence="1">AspRS</shortName>
    </alternativeName>
    <alternativeName>
        <fullName evidence="1">Non-discriminating aspartyl-tRNA synthetase</fullName>
        <shortName evidence="1">ND-AspRS</shortName>
    </alternativeName>
</protein>
<feature type="chain" id="PRO_0000110862" description="Aspartate--tRNA(Asp/Asn) ligase">
    <location>
        <begin position="1"/>
        <end position="600"/>
    </location>
</feature>
<feature type="region of interest" description="Aspartate" evidence="1">
    <location>
        <begin position="199"/>
        <end position="202"/>
    </location>
</feature>
<feature type="region of interest" description="Disordered" evidence="2">
    <location>
        <begin position="564"/>
        <end position="600"/>
    </location>
</feature>
<feature type="compositionally biased region" description="Basic and acidic residues" evidence="2">
    <location>
        <begin position="580"/>
        <end position="600"/>
    </location>
</feature>
<feature type="binding site" evidence="1">
    <location>
        <position position="175"/>
    </location>
    <ligand>
        <name>L-aspartate</name>
        <dbReference type="ChEBI" id="CHEBI:29991"/>
    </ligand>
</feature>
<feature type="binding site" evidence="1">
    <location>
        <begin position="221"/>
        <end position="223"/>
    </location>
    <ligand>
        <name>ATP</name>
        <dbReference type="ChEBI" id="CHEBI:30616"/>
    </ligand>
</feature>
<feature type="binding site" evidence="1">
    <location>
        <position position="221"/>
    </location>
    <ligand>
        <name>L-aspartate</name>
        <dbReference type="ChEBI" id="CHEBI:29991"/>
    </ligand>
</feature>
<feature type="binding site" evidence="1">
    <location>
        <position position="230"/>
    </location>
    <ligand>
        <name>ATP</name>
        <dbReference type="ChEBI" id="CHEBI:30616"/>
    </ligand>
</feature>
<feature type="binding site" evidence="1">
    <location>
        <position position="453"/>
    </location>
    <ligand>
        <name>L-aspartate</name>
        <dbReference type="ChEBI" id="CHEBI:29991"/>
    </ligand>
</feature>
<feature type="binding site" evidence="1">
    <location>
        <position position="487"/>
    </location>
    <ligand>
        <name>ATP</name>
        <dbReference type="ChEBI" id="CHEBI:30616"/>
    </ligand>
</feature>
<feature type="binding site" evidence="1">
    <location>
        <position position="494"/>
    </location>
    <ligand>
        <name>L-aspartate</name>
        <dbReference type="ChEBI" id="CHEBI:29991"/>
    </ligand>
</feature>
<feature type="binding site" evidence="1">
    <location>
        <begin position="539"/>
        <end position="542"/>
    </location>
    <ligand>
        <name>ATP</name>
        <dbReference type="ChEBI" id="CHEBI:30616"/>
    </ligand>
</feature>
<feature type="site" description="Important for tRNA non-discrimination" evidence="1">
    <location>
        <position position="31"/>
    </location>
</feature>
<feature type="site" description="Important for tRNA non-discrimination" evidence="1">
    <location>
        <position position="80"/>
    </location>
</feature>
<organism>
    <name type="scientific">Corynebacterium efficiens (strain DSM 44549 / YS-314 / AJ 12310 / JCM 11189 / NBRC 100395)</name>
    <dbReference type="NCBI Taxonomy" id="196164"/>
    <lineage>
        <taxon>Bacteria</taxon>
        <taxon>Bacillati</taxon>
        <taxon>Actinomycetota</taxon>
        <taxon>Actinomycetes</taxon>
        <taxon>Mycobacteriales</taxon>
        <taxon>Corynebacteriaceae</taxon>
        <taxon>Corynebacterium</taxon>
    </lineage>
</organism>
<keyword id="KW-0030">Aminoacyl-tRNA synthetase</keyword>
<keyword id="KW-0067">ATP-binding</keyword>
<keyword id="KW-0963">Cytoplasm</keyword>
<keyword id="KW-0436">Ligase</keyword>
<keyword id="KW-0547">Nucleotide-binding</keyword>
<keyword id="KW-0648">Protein biosynthesis</keyword>
<keyword id="KW-1185">Reference proteome</keyword>
<accession>Q8FT19</accession>
<gene>
    <name evidence="1" type="primary">aspS</name>
    <name type="ordered locus">CE1752</name>
</gene>
<dbReference type="EC" id="6.1.1.23" evidence="1"/>
<dbReference type="EMBL" id="BA000035">
    <property type="protein sequence ID" value="BAC18562.1"/>
    <property type="status" value="ALT_INIT"/>
    <property type="molecule type" value="Genomic_DNA"/>
</dbReference>
<dbReference type="RefSeq" id="WP_035108829.1">
    <property type="nucleotide sequence ID" value="NC_004369.1"/>
</dbReference>
<dbReference type="SMR" id="Q8FT19"/>
<dbReference type="STRING" id="196164.gene:10742173"/>
<dbReference type="KEGG" id="cef:CE1752"/>
<dbReference type="eggNOG" id="COG0173">
    <property type="taxonomic scope" value="Bacteria"/>
</dbReference>
<dbReference type="HOGENOM" id="CLU_014330_3_2_11"/>
<dbReference type="OrthoDB" id="9802326at2"/>
<dbReference type="Proteomes" id="UP000001409">
    <property type="component" value="Chromosome"/>
</dbReference>
<dbReference type="GO" id="GO:0005737">
    <property type="term" value="C:cytoplasm"/>
    <property type="evidence" value="ECO:0007669"/>
    <property type="project" value="UniProtKB-SubCell"/>
</dbReference>
<dbReference type="GO" id="GO:0004815">
    <property type="term" value="F:aspartate-tRNA ligase activity"/>
    <property type="evidence" value="ECO:0007669"/>
    <property type="project" value="UniProtKB-UniRule"/>
</dbReference>
<dbReference type="GO" id="GO:0050560">
    <property type="term" value="F:aspartate-tRNA(Asn) ligase activity"/>
    <property type="evidence" value="ECO:0007669"/>
    <property type="project" value="UniProtKB-EC"/>
</dbReference>
<dbReference type="GO" id="GO:0005524">
    <property type="term" value="F:ATP binding"/>
    <property type="evidence" value="ECO:0007669"/>
    <property type="project" value="UniProtKB-UniRule"/>
</dbReference>
<dbReference type="GO" id="GO:0003676">
    <property type="term" value="F:nucleic acid binding"/>
    <property type="evidence" value="ECO:0007669"/>
    <property type="project" value="InterPro"/>
</dbReference>
<dbReference type="GO" id="GO:0006422">
    <property type="term" value="P:aspartyl-tRNA aminoacylation"/>
    <property type="evidence" value="ECO:0007669"/>
    <property type="project" value="UniProtKB-UniRule"/>
</dbReference>
<dbReference type="CDD" id="cd00777">
    <property type="entry name" value="AspRS_core"/>
    <property type="match status" value="1"/>
</dbReference>
<dbReference type="CDD" id="cd04317">
    <property type="entry name" value="EcAspRS_like_N"/>
    <property type="match status" value="1"/>
</dbReference>
<dbReference type="Gene3D" id="3.30.930.10">
    <property type="entry name" value="Bira Bifunctional Protein, Domain 2"/>
    <property type="match status" value="1"/>
</dbReference>
<dbReference type="Gene3D" id="3.30.1360.30">
    <property type="entry name" value="GAD-like domain"/>
    <property type="match status" value="1"/>
</dbReference>
<dbReference type="Gene3D" id="2.40.50.140">
    <property type="entry name" value="Nucleic acid-binding proteins"/>
    <property type="match status" value="1"/>
</dbReference>
<dbReference type="HAMAP" id="MF_00044">
    <property type="entry name" value="Asp_tRNA_synth_type1"/>
    <property type="match status" value="1"/>
</dbReference>
<dbReference type="InterPro" id="IPR004364">
    <property type="entry name" value="Aa-tRNA-synt_II"/>
</dbReference>
<dbReference type="InterPro" id="IPR006195">
    <property type="entry name" value="aa-tRNA-synth_II"/>
</dbReference>
<dbReference type="InterPro" id="IPR045864">
    <property type="entry name" value="aa-tRNA-synth_II/BPL/LPL"/>
</dbReference>
<dbReference type="InterPro" id="IPR004524">
    <property type="entry name" value="Asp-tRNA-ligase_1"/>
</dbReference>
<dbReference type="InterPro" id="IPR047089">
    <property type="entry name" value="Asp-tRNA-ligase_1_N"/>
</dbReference>
<dbReference type="InterPro" id="IPR002312">
    <property type="entry name" value="Asp/Asn-tRNA-synth_IIb"/>
</dbReference>
<dbReference type="InterPro" id="IPR047090">
    <property type="entry name" value="AspRS_core"/>
</dbReference>
<dbReference type="InterPro" id="IPR004115">
    <property type="entry name" value="GAD-like_sf"/>
</dbReference>
<dbReference type="InterPro" id="IPR029351">
    <property type="entry name" value="GAD_dom"/>
</dbReference>
<dbReference type="InterPro" id="IPR012340">
    <property type="entry name" value="NA-bd_OB-fold"/>
</dbReference>
<dbReference type="InterPro" id="IPR004365">
    <property type="entry name" value="NA-bd_OB_tRNA"/>
</dbReference>
<dbReference type="NCBIfam" id="TIGR00459">
    <property type="entry name" value="aspS_bact"/>
    <property type="match status" value="1"/>
</dbReference>
<dbReference type="NCBIfam" id="NF001750">
    <property type="entry name" value="PRK00476.1"/>
    <property type="match status" value="1"/>
</dbReference>
<dbReference type="PANTHER" id="PTHR22594:SF5">
    <property type="entry name" value="ASPARTATE--TRNA LIGASE, MITOCHONDRIAL"/>
    <property type="match status" value="1"/>
</dbReference>
<dbReference type="PANTHER" id="PTHR22594">
    <property type="entry name" value="ASPARTYL/LYSYL-TRNA SYNTHETASE"/>
    <property type="match status" value="1"/>
</dbReference>
<dbReference type="Pfam" id="PF02938">
    <property type="entry name" value="GAD"/>
    <property type="match status" value="1"/>
</dbReference>
<dbReference type="Pfam" id="PF00152">
    <property type="entry name" value="tRNA-synt_2"/>
    <property type="match status" value="1"/>
</dbReference>
<dbReference type="Pfam" id="PF01336">
    <property type="entry name" value="tRNA_anti-codon"/>
    <property type="match status" value="1"/>
</dbReference>
<dbReference type="PRINTS" id="PR01042">
    <property type="entry name" value="TRNASYNTHASP"/>
</dbReference>
<dbReference type="SUPFAM" id="SSF55681">
    <property type="entry name" value="Class II aaRS and biotin synthetases"/>
    <property type="match status" value="1"/>
</dbReference>
<dbReference type="SUPFAM" id="SSF55261">
    <property type="entry name" value="GAD domain-like"/>
    <property type="match status" value="1"/>
</dbReference>
<dbReference type="SUPFAM" id="SSF50249">
    <property type="entry name" value="Nucleic acid-binding proteins"/>
    <property type="match status" value="1"/>
</dbReference>
<dbReference type="PROSITE" id="PS50862">
    <property type="entry name" value="AA_TRNA_LIGASE_II"/>
    <property type="match status" value="1"/>
</dbReference>